<dbReference type="EMBL" id="AP005505">
    <property type="protein sequence ID" value="BAD05739.1"/>
    <property type="molecule type" value="Genomic_DNA"/>
</dbReference>
<dbReference type="EMBL" id="AP005531">
    <property type="protein sequence ID" value="BAD05778.1"/>
    <property type="molecule type" value="Genomic_DNA"/>
</dbReference>
<dbReference type="EMBL" id="AP008214">
    <property type="protein sequence ID" value="BAH94143.1"/>
    <property type="molecule type" value="Genomic_DNA"/>
</dbReference>
<dbReference type="EMBL" id="AP014964">
    <property type="protein sequence ID" value="BAT04158.1"/>
    <property type="molecule type" value="Genomic_DNA"/>
</dbReference>
<dbReference type="EMBL" id="CM000145">
    <property type="protein sequence ID" value="EAZ41766.1"/>
    <property type="molecule type" value="Genomic_DNA"/>
</dbReference>
<dbReference type="RefSeq" id="XP_015648901.1">
    <property type="nucleotide sequence ID" value="XM_015793415.1"/>
</dbReference>
<dbReference type="SMR" id="Q6YZ99"/>
<dbReference type="FunCoup" id="Q6YZ99">
    <property type="interactions" value="40"/>
</dbReference>
<dbReference type="STRING" id="39947.Q6YZ99"/>
<dbReference type="PaxDb" id="39947-Q6YZ99"/>
<dbReference type="EnsemblPlants" id="Os08t0189850-01">
    <property type="protein sequence ID" value="Os08t0189850-01"/>
    <property type="gene ID" value="Os08g0189850"/>
</dbReference>
<dbReference type="Gramene" id="Os08t0189850-01">
    <property type="protein sequence ID" value="Os08t0189850-01"/>
    <property type="gene ID" value="Os08g0189850"/>
</dbReference>
<dbReference type="KEGG" id="dosa:Os08g0189850"/>
<dbReference type="HOGENOM" id="CLU_015790_0_0_1"/>
<dbReference type="InParanoid" id="Q6YZ99"/>
<dbReference type="OMA" id="ACCHASD"/>
<dbReference type="OrthoDB" id="1850619at2759"/>
<dbReference type="Proteomes" id="UP000000763">
    <property type="component" value="Chromosome 8"/>
</dbReference>
<dbReference type="Proteomes" id="UP000007752">
    <property type="component" value="Chromosome 8"/>
</dbReference>
<dbReference type="Proteomes" id="UP000059680">
    <property type="component" value="Chromosome 8"/>
</dbReference>
<dbReference type="GO" id="GO:0048046">
    <property type="term" value="C:apoplast"/>
    <property type="evidence" value="ECO:0007669"/>
    <property type="project" value="UniProtKB-SubCell"/>
</dbReference>
<dbReference type="GO" id="GO:0030145">
    <property type="term" value="F:manganese ion binding"/>
    <property type="evidence" value="ECO:0007669"/>
    <property type="project" value="InterPro"/>
</dbReference>
<dbReference type="CDD" id="cd02241">
    <property type="entry name" value="cupin_OxOx"/>
    <property type="match status" value="1"/>
</dbReference>
<dbReference type="FunFam" id="2.60.120.10:FF:000005">
    <property type="entry name" value="Germin-like protein subfamily 1 member 8"/>
    <property type="match status" value="1"/>
</dbReference>
<dbReference type="Gene3D" id="2.60.120.10">
    <property type="entry name" value="Jelly Rolls"/>
    <property type="match status" value="1"/>
</dbReference>
<dbReference type="InterPro" id="IPR006045">
    <property type="entry name" value="Cupin_1"/>
</dbReference>
<dbReference type="InterPro" id="IPR001929">
    <property type="entry name" value="Germin"/>
</dbReference>
<dbReference type="InterPro" id="IPR019780">
    <property type="entry name" value="Germin_Mn-BS"/>
</dbReference>
<dbReference type="InterPro" id="IPR014710">
    <property type="entry name" value="RmlC-like_jellyroll"/>
</dbReference>
<dbReference type="InterPro" id="IPR011051">
    <property type="entry name" value="RmlC_Cupin_sf"/>
</dbReference>
<dbReference type="PANTHER" id="PTHR31238">
    <property type="entry name" value="GERMIN-LIKE PROTEIN SUBFAMILY 3 MEMBER 3"/>
    <property type="match status" value="1"/>
</dbReference>
<dbReference type="Pfam" id="PF00190">
    <property type="entry name" value="Cupin_1"/>
    <property type="match status" value="1"/>
</dbReference>
<dbReference type="PRINTS" id="PR00325">
    <property type="entry name" value="GERMIN"/>
</dbReference>
<dbReference type="SMART" id="SM00835">
    <property type="entry name" value="Cupin_1"/>
    <property type="match status" value="1"/>
</dbReference>
<dbReference type="SUPFAM" id="SSF51182">
    <property type="entry name" value="RmlC-like cupins"/>
    <property type="match status" value="1"/>
</dbReference>
<dbReference type="PROSITE" id="PS00725">
    <property type="entry name" value="GERMIN"/>
    <property type="match status" value="1"/>
</dbReference>
<reference key="1">
    <citation type="journal article" date="2005" name="Nature">
        <title>The map-based sequence of the rice genome.</title>
        <authorList>
            <consortium name="International rice genome sequencing project (IRGSP)"/>
        </authorList>
    </citation>
    <scope>NUCLEOTIDE SEQUENCE [LARGE SCALE GENOMIC DNA]</scope>
    <source>
        <strain>cv. Nipponbare</strain>
    </source>
</reference>
<reference key="2">
    <citation type="journal article" date="2008" name="Nucleic Acids Res.">
        <title>The rice annotation project database (RAP-DB): 2008 update.</title>
        <authorList>
            <consortium name="The rice annotation project (RAP)"/>
        </authorList>
    </citation>
    <scope>GENOME REANNOTATION</scope>
    <source>
        <strain>cv. Nipponbare</strain>
    </source>
</reference>
<reference key="3">
    <citation type="journal article" date="2013" name="Rice">
        <title>Improvement of the Oryza sativa Nipponbare reference genome using next generation sequence and optical map data.</title>
        <authorList>
            <person name="Kawahara Y."/>
            <person name="de la Bastide M."/>
            <person name="Hamilton J.P."/>
            <person name="Kanamori H."/>
            <person name="McCombie W.R."/>
            <person name="Ouyang S."/>
            <person name="Schwartz D.C."/>
            <person name="Tanaka T."/>
            <person name="Wu J."/>
            <person name="Zhou S."/>
            <person name="Childs K.L."/>
            <person name="Davidson R.M."/>
            <person name="Lin H."/>
            <person name="Quesada-Ocampo L."/>
            <person name="Vaillancourt B."/>
            <person name="Sakai H."/>
            <person name="Lee S.S."/>
            <person name="Kim J."/>
            <person name="Numa H."/>
            <person name="Itoh T."/>
            <person name="Buell C.R."/>
            <person name="Matsumoto T."/>
        </authorList>
    </citation>
    <scope>GENOME REANNOTATION</scope>
    <source>
        <strain>cv. Nipponbare</strain>
    </source>
</reference>
<reference key="4">
    <citation type="journal article" date="2005" name="PLoS Biol.">
        <title>The genomes of Oryza sativa: a history of duplications.</title>
        <authorList>
            <person name="Yu J."/>
            <person name="Wang J."/>
            <person name="Lin W."/>
            <person name="Li S."/>
            <person name="Li H."/>
            <person name="Zhou J."/>
            <person name="Ni P."/>
            <person name="Dong W."/>
            <person name="Hu S."/>
            <person name="Zeng C."/>
            <person name="Zhang J."/>
            <person name="Zhang Y."/>
            <person name="Li R."/>
            <person name="Xu Z."/>
            <person name="Li S."/>
            <person name="Li X."/>
            <person name="Zheng H."/>
            <person name="Cong L."/>
            <person name="Lin L."/>
            <person name="Yin J."/>
            <person name="Geng J."/>
            <person name="Li G."/>
            <person name="Shi J."/>
            <person name="Liu J."/>
            <person name="Lv H."/>
            <person name="Li J."/>
            <person name="Wang J."/>
            <person name="Deng Y."/>
            <person name="Ran L."/>
            <person name="Shi X."/>
            <person name="Wang X."/>
            <person name="Wu Q."/>
            <person name="Li C."/>
            <person name="Ren X."/>
            <person name="Wang J."/>
            <person name="Wang X."/>
            <person name="Li D."/>
            <person name="Liu D."/>
            <person name="Zhang X."/>
            <person name="Ji Z."/>
            <person name="Zhao W."/>
            <person name="Sun Y."/>
            <person name="Zhang Z."/>
            <person name="Bao J."/>
            <person name="Han Y."/>
            <person name="Dong L."/>
            <person name="Ji J."/>
            <person name="Chen P."/>
            <person name="Wu S."/>
            <person name="Liu J."/>
            <person name="Xiao Y."/>
            <person name="Bu D."/>
            <person name="Tan J."/>
            <person name="Yang L."/>
            <person name="Ye C."/>
            <person name="Zhang J."/>
            <person name="Xu J."/>
            <person name="Zhou Y."/>
            <person name="Yu Y."/>
            <person name="Zhang B."/>
            <person name="Zhuang S."/>
            <person name="Wei H."/>
            <person name="Liu B."/>
            <person name="Lei M."/>
            <person name="Yu H."/>
            <person name="Li Y."/>
            <person name="Xu H."/>
            <person name="Wei S."/>
            <person name="He X."/>
            <person name="Fang L."/>
            <person name="Zhang Z."/>
            <person name="Zhang Y."/>
            <person name="Huang X."/>
            <person name="Su Z."/>
            <person name="Tong W."/>
            <person name="Li J."/>
            <person name="Tong Z."/>
            <person name="Li S."/>
            <person name="Ye J."/>
            <person name="Wang L."/>
            <person name="Fang L."/>
            <person name="Lei T."/>
            <person name="Chen C.-S."/>
            <person name="Chen H.-C."/>
            <person name="Xu Z."/>
            <person name="Li H."/>
            <person name="Huang H."/>
            <person name="Zhang F."/>
            <person name="Xu H."/>
            <person name="Li N."/>
            <person name="Zhao C."/>
            <person name="Li S."/>
            <person name="Dong L."/>
            <person name="Huang Y."/>
            <person name="Li L."/>
            <person name="Xi Y."/>
            <person name="Qi Q."/>
            <person name="Li W."/>
            <person name="Zhang B."/>
            <person name="Hu W."/>
            <person name="Zhang Y."/>
            <person name="Tian X."/>
            <person name="Jiao Y."/>
            <person name="Liang X."/>
            <person name="Jin J."/>
            <person name="Gao L."/>
            <person name="Zheng W."/>
            <person name="Hao B."/>
            <person name="Liu S.-M."/>
            <person name="Wang W."/>
            <person name="Yuan L."/>
            <person name="Cao M."/>
            <person name="McDermott J."/>
            <person name="Samudrala R."/>
            <person name="Wang J."/>
            <person name="Wong G.K.-S."/>
            <person name="Yang H."/>
        </authorList>
    </citation>
    <scope>NUCLEOTIDE SEQUENCE [LARGE SCALE GENOMIC DNA]</scope>
    <source>
        <strain>cv. Nipponbare</strain>
    </source>
</reference>
<reference key="5">
    <citation type="journal article" date="2009" name="Plant Physiol.">
        <title>A germin-like protein gene family functions as a complex quantitative trait locus conferring broad-spectrum disease resistance in rice.</title>
        <authorList>
            <person name="Manosalva P.M."/>
            <person name="Davidson R.M."/>
            <person name="Liu B."/>
            <person name="Zhu X."/>
            <person name="Hulbert S.H."/>
            <person name="Leung H."/>
            <person name="Leach J.E."/>
        </authorList>
    </citation>
    <scope>FUNCTION</scope>
</reference>
<name>GL89_ORYSJ</name>
<gene>
    <name type="ordered locus">Os08g0189850</name>
    <name type="ordered locus">LOC_Os08g09040</name>
    <name type="ORF">B1099H05.37</name>
    <name type="ORF">OsJ_025249</name>
    <name type="ORF">P0610E02.13</name>
</gene>
<feature type="signal peptide" evidence="2">
    <location>
        <begin position="1"/>
        <end position="22"/>
    </location>
</feature>
<feature type="chain" id="PRO_0000365521" description="Germin-like protein 8-9">
    <location>
        <begin position="23"/>
        <end position="224"/>
    </location>
</feature>
<feature type="domain" description="Cupin type-1" evidence="2">
    <location>
        <begin position="62"/>
        <end position="212"/>
    </location>
</feature>
<feature type="binding site" evidence="1">
    <location>
        <position position="109"/>
    </location>
    <ligand>
        <name>Mn(2+)</name>
        <dbReference type="ChEBI" id="CHEBI:29035"/>
    </ligand>
</feature>
<feature type="binding site" evidence="1">
    <location>
        <position position="111"/>
    </location>
    <ligand>
        <name>Mn(2+)</name>
        <dbReference type="ChEBI" id="CHEBI:29035"/>
    </ligand>
</feature>
<feature type="binding site" evidence="1">
    <location>
        <position position="116"/>
    </location>
    <ligand>
        <name>Mn(2+)</name>
        <dbReference type="ChEBI" id="CHEBI:29035"/>
    </ligand>
</feature>
<feature type="binding site" evidence="1">
    <location>
        <position position="157"/>
    </location>
    <ligand>
        <name>Mn(2+)</name>
        <dbReference type="ChEBI" id="CHEBI:29035"/>
    </ligand>
</feature>
<feature type="glycosylation site" description="N-linked (GlcNAc...) asparagine" evidence="2">
    <location>
        <position position="76"/>
    </location>
</feature>
<feature type="glycosylation site" description="N-linked (GlcNAc...) asparagine" evidence="2">
    <location>
        <position position="135"/>
    </location>
</feature>
<feature type="disulfide bond" evidence="1">
    <location>
        <begin position="32"/>
        <end position="47"/>
    </location>
</feature>
<proteinExistence type="evidence at transcript level"/>
<comment type="function">
    <text evidence="3">Plays a role in broad-spectrum disease resistance. Probably has no oxalate oxidase activity even if the active site is conserved.</text>
</comment>
<comment type="subunit">
    <text evidence="1">Oligomer (believed to be a pentamer but probably hexamer).</text>
</comment>
<comment type="subcellular location">
    <subcellularLocation>
        <location evidence="1">Secreted</location>
        <location evidence="1">Extracellular space</location>
        <location evidence="1">Apoplast</location>
    </subcellularLocation>
</comment>
<comment type="miscellaneous">
    <text>Member of the 12 germin-like protein gene cluster located on chromosome 8 in the major-effect quantitative trait loci (QTL) for fungal blast resistance. Partial suppression of the 12 germin-like protein genes increases susceptibility to the fungal pathogens causing rice blast and sheath blight diseases.</text>
</comment>
<comment type="similarity">
    <text evidence="4">Belongs to the germin family.</text>
</comment>
<sequence length="224" mass="24184">MASPSFCLFAALLALVSWQAIASDPSPLQDFCVADKHSPVLVNGFACLDPKYVTADHFFKAAMLDTPRKTNKVGSNVTLINVMQIPGLNTLGISIARIDYAPLGQNPPHTHPRATEILTVLEGTLHVGFVTSNPNNTLFSKVLNKGDVFVFPVGLIHFQFNPNPHQPAVAIAALSSQNPGVITIANAVFGSKPPISDEVLAKAFQVGKGTIDWLQAQFWENNHY</sequence>
<accession>Q6YZ99</accession>
<accession>C7J647</accession>
<evidence type="ECO:0000250" key="1"/>
<evidence type="ECO:0000255" key="2"/>
<evidence type="ECO:0000269" key="3">
    <source>
    </source>
</evidence>
<evidence type="ECO:0000305" key="4"/>
<organism>
    <name type="scientific">Oryza sativa subsp. japonica</name>
    <name type="common">Rice</name>
    <dbReference type="NCBI Taxonomy" id="39947"/>
    <lineage>
        <taxon>Eukaryota</taxon>
        <taxon>Viridiplantae</taxon>
        <taxon>Streptophyta</taxon>
        <taxon>Embryophyta</taxon>
        <taxon>Tracheophyta</taxon>
        <taxon>Spermatophyta</taxon>
        <taxon>Magnoliopsida</taxon>
        <taxon>Liliopsida</taxon>
        <taxon>Poales</taxon>
        <taxon>Poaceae</taxon>
        <taxon>BOP clade</taxon>
        <taxon>Oryzoideae</taxon>
        <taxon>Oryzeae</taxon>
        <taxon>Oryzinae</taxon>
        <taxon>Oryza</taxon>
        <taxon>Oryza sativa</taxon>
    </lineage>
</organism>
<keyword id="KW-0052">Apoplast</keyword>
<keyword id="KW-1015">Disulfide bond</keyword>
<keyword id="KW-0325">Glycoprotein</keyword>
<keyword id="KW-0464">Manganese</keyword>
<keyword id="KW-0479">Metal-binding</keyword>
<keyword id="KW-1185">Reference proteome</keyword>
<keyword id="KW-0964">Secreted</keyword>
<keyword id="KW-0732">Signal</keyword>
<protein>
    <recommendedName>
        <fullName>Germin-like protein 8-9</fullName>
    </recommendedName>
</protein>